<reference key="1">
    <citation type="journal article" date="2004" name="Proc. Natl. Acad. Sci. U.S.A.">
        <title>The diploid genome sequence of Candida albicans.</title>
        <authorList>
            <person name="Jones T."/>
            <person name="Federspiel N.A."/>
            <person name="Chibana H."/>
            <person name="Dungan J."/>
            <person name="Kalman S."/>
            <person name="Magee B.B."/>
            <person name="Newport G."/>
            <person name="Thorstenson Y.R."/>
            <person name="Agabian N."/>
            <person name="Magee P.T."/>
            <person name="Davis R.W."/>
            <person name="Scherer S."/>
        </authorList>
    </citation>
    <scope>NUCLEOTIDE SEQUENCE [LARGE SCALE GENOMIC DNA]</scope>
    <source>
        <strain>SC5314 / ATCC MYA-2876</strain>
    </source>
</reference>
<reference key="2">
    <citation type="journal article" date="2007" name="Genome Biol.">
        <title>Assembly of the Candida albicans genome into sixteen supercontigs aligned on the eight chromosomes.</title>
        <authorList>
            <person name="van het Hoog M."/>
            <person name="Rast T.J."/>
            <person name="Martchenko M."/>
            <person name="Grindle S."/>
            <person name="Dignard D."/>
            <person name="Hogues H."/>
            <person name="Cuomo C."/>
            <person name="Berriman M."/>
            <person name="Scherer S."/>
            <person name="Magee B.B."/>
            <person name="Whiteway M."/>
            <person name="Chibana H."/>
            <person name="Nantel A."/>
            <person name="Magee P.T."/>
        </authorList>
    </citation>
    <scope>GENOME REANNOTATION</scope>
    <source>
        <strain>SC5314 / ATCC MYA-2876</strain>
    </source>
</reference>
<reference key="3">
    <citation type="journal article" date="2013" name="Genome Biol.">
        <title>Assembly of a phased diploid Candida albicans genome facilitates allele-specific measurements and provides a simple model for repeat and indel structure.</title>
        <authorList>
            <person name="Muzzey D."/>
            <person name="Schwartz K."/>
            <person name="Weissman J.S."/>
            <person name="Sherlock G."/>
        </authorList>
    </citation>
    <scope>NUCLEOTIDE SEQUENCE [LARGE SCALE GENOMIC DNA]</scope>
    <scope>GENOME REANNOTATION</scope>
    <source>
        <strain>SC5314 / ATCC MYA-2876</strain>
    </source>
</reference>
<reference key="4">
    <citation type="journal article" date="2005" name="Shi Yan Sheng Wu Xue Bao">
        <title>Cloning and functional study of CaPPe1 in Candida albicans by using Saccharomyces cerevisiae model system.</title>
        <authorList>
            <person name="Cao F."/>
            <person name="Chen J.Y."/>
        </authorList>
    </citation>
    <scope>FUNCTION</scope>
</reference>
<feature type="chain" id="PRO_0000223661" description="Protein phosphatase methylesterase 1">
    <location>
        <begin position="1"/>
        <end position="360"/>
    </location>
</feature>
<feature type="region of interest" description="Disordered" evidence="2">
    <location>
        <begin position="26"/>
        <end position="50"/>
    </location>
</feature>
<feature type="active site" evidence="1">
    <location>
        <position position="167"/>
    </location>
</feature>
<feature type="active site" evidence="1">
    <location>
        <position position="192"/>
    </location>
</feature>
<feature type="active site" evidence="1">
    <location>
        <position position="316"/>
    </location>
</feature>
<evidence type="ECO:0000250" key="1"/>
<evidence type="ECO:0000256" key="2">
    <source>
        <dbReference type="SAM" id="MobiDB-lite"/>
    </source>
</evidence>
<evidence type="ECO:0000269" key="3">
    <source>
    </source>
</evidence>
<evidence type="ECO:0000305" key="4"/>
<keyword id="KW-0378">Hydrolase</keyword>
<keyword id="KW-1185">Reference proteome</keyword>
<keyword id="KW-0719">Serine esterase</keyword>
<comment type="function">
    <text evidence="1 3">Demethylates proteins that have been reversibly carboxymethylated. Demethylates the phosphatase PP2A catalytic subunit (By similarity). Involved in the regulation of filamentous growth.</text>
</comment>
<comment type="catalytic activity">
    <reaction>
        <text>[phosphatase 2A protein]-C-terminal L-leucine methyl ester + H2O = [phosphatase 2A protein]-C-terminal L-leucine + methanol + H(+)</text>
        <dbReference type="Rhea" id="RHEA:48548"/>
        <dbReference type="Rhea" id="RHEA-COMP:12134"/>
        <dbReference type="Rhea" id="RHEA-COMP:12135"/>
        <dbReference type="ChEBI" id="CHEBI:15377"/>
        <dbReference type="ChEBI" id="CHEBI:15378"/>
        <dbReference type="ChEBI" id="CHEBI:17790"/>
        <dbReference type="ChEBI" id="CHEBI:90516"/>
        <dbReference type="ChEBI" id="CHEBI:90517"/>
        <dbReference type="EC" id="3.1.1.89"/>
    </reaction>
</comment>
<comment type="similarity">
    <text evidence="4">Belongs to the AB hydrolase superfamily.</text>
</comment>
<organism>
    <name type="scientific">Candida albicans (strain SC5314 / ATCC MYA-2876)</name>
    <name type="common">Yeast</name>
    <dbReference type="NCBI Taxonomy" id="237561"/>
    <lineage>
        <taxon>Eukaryota</taxon>
        <taxon>Fungi</taxon>
        <taxon>Dikarya</taxon>
        <taxon>Ascomycota</taxon>
        <taxon>Saccharomycotina</taxon>
        <taxon>Pichiomycetes</taxon>
        <taxon>Debaryomycetaceae</taxon>
        <taxon>Candida/Lodderomyces clade</taxon>
        <taxon>Candida</taxon>
    </lineage>
</organism>
<protein>
    <recommendedName>
        <fullName>Protein phosphatase methylesterase 1</fullName>
        <shortName>PME-1</shortName>
        <ecNumber>3.1.1.89</ecNumber>
    </recommendedName>
</protein>
<accession>Q5ALW7</accession>
<accession>A0A1D8PGC4</accession>
<name>PPME1_CANAL</name>
<dbReference type="EC" id="3.1.1.89"/>
<dbReference type="EMBL" id="CP017624">
    <property type="protein sequence ID" value="AOW27198.1"/>
    <property type="molecule type" value="Genomic_DNA"/>
</dbReference>
<dbReference type="RefSeq" id="XP_722509.1">
    <property type="nucleotide sequence ID" value="XM_717416.1"/>
</dbReference>
<dbReference type="SMR" id="Q5ALW7"/>
<dbReference type="FunCoup" id="Q5ALW7">
    <property type="interactions" value="875"/>
</dbReference>
<dbReference type="STRING" id="237561.Q5ALW7"/>
<dbReference type="ESTHER" id="canal-ppme1">
    <property type="family name" value="PPase_methylesterase_euk"/>
</dbReference>
<dbReference type="EnsemblFungi" id="C2_01520W_A-T">
    <property type="protein sequence ID" value="C2_01520W_A-T-p1"/>
    <property type="gene ID" value="C2_01520W_A"/>
</dbReference>
<dbReference type="GeneID" id="3635802"/>
<dbReference type="KEGG" id="cal:CAALFM_C201520WA"/>
<dbReference type="CGD" id="CAL0000196033">
    <property type="gene designation" value="PPE1"/>
</dbReference>
<dbReference type="VEuPathDB" id="FungiDB:C2_01520W_A"/>
<dbReference type="eggNOG" id="KOG2564">
    <property type="taxonomic scope" value="Eukaryota"/>
</dbReference>
<dbReference type="HOGENOM" id="CLU_024818_3_1_1"/>
<dbReference type="InParanoid" id="Q5ALW7"/>
<dbReference type="OMA" id="VMVCHHG"/>
<dbReference type="OrthoDB" id="194865at2759"/>
<dbReference type="PRO" id="PR:Q5ALW7"/>
<dbReference type="Proteomes" id="UP000000559">
    <property type="component" value="Chromosome 2"/>
</dbReference>
<dbReference type="GO" id="GO:0005763">
    <property type="term" value="C:mitochondrial small ribosomal subunit"/>
    <property type="evidence" value="ECO:0007669"/>
    <property type="project" value="EnsemblFungi"/>
</dbReference>
<dbReference type="GO" id="GO:0051722">
    <property type="term" value="F:protein C-terminal methylesterase activity"/>
    <property type="evidence" value="ECO:0000318"/>
    <property type="project" value="GO_Central"/>
</dbReference>
<dbReference type="FunFam" id="3.40.50.1820:FF:000769">
    <property type="entry name" value="Protein phosphatase methylesterase 1"/>
    <property type="match status" value="1"/>
</dbReference>
<dbReference type="Gene3D" id="3.40.50.1820">
    <property type="entry name" value="alpha/beta hydrolase"/>
    <property type="match status" value="1"/>
</dbReference>
<dbReference type="InterPro" id="IPR000073">
    <property type="entry name" value="AB_hydrolase_1"/>
</dbReference>
<dbReference type="InterPro" id="IPR029058">
    <property type="entry name" value="AB_hydrolase_fold"/>
</dbReference>
<dbReference type="InterPro" id="IPR016812">
    <property type="entry name" value="PPase_methylesterase_euk"/>
</dbReference>
<dbReference type="PANTHER" id="PTHR14189:SF0">
    <property type="entry name" value="PROTEIN PHOSPHATASE METHYLESTERASE 1"/>
    <property type="match status" value="1"/>
</dbReference>
<dbReference type="PANTHER" id="PTHR14189">
    <property type="entry name" value="PROTEIN PHOSPHATASE METHYLESTERASE-1 RELATED"/>
    <property type="match status" value="1"/>
</dbReference>
<dbReference type="Pfam" id="PF00561">
    <property type="entry name" value="Abhydrolase_1"/>
    <property type="match status" value="1"/>
</dbReference>
<dbReference type="PIRSF" id="PIRSF022950">
    <property type="entry name" value="PPase_methylesterase_euk"/>
    <property type="match status" value="1"/>
</dbReference>
<dbReference type="SUPFAM" id="SSF53474">
    <property type="entry name" value="alpha/beta-Hydrolases"/>
    <property type="match status" value="1"/>
</dbReference>
<gene>
    <name type="primary">PPE1</name>
    <name type="ordered locus">CAALFM_C201520WA</name>
    <name type="ORF">CaO19.1459</name>
    <name type="ORF">CaO19.9034</name>
</gene>
<sequence>MSELHKAFLRRIKEQETALGLSGLVDEDDIPEPAVMPPTGNSSSTANTEDETILRDYKQFKETNFIQEFYENELGHKFKTYYKPSKKPGSILFCHHGAGSSSMTFGNLVNHIEDESVGIFLFDTRGHGESVATSDFSLDTLVQDVSFVLEQFSSKHQQTSIFLLGHSLGGAVLAKYSTLYPSDILKGLILLDIVEEAAVQSLNAMPSFIARRPLSFPSLSKAISWHMNFLLFNEKSARLSVPDLFTDKLTWITDLNATQPYWQTWFSGLSENFLGFKGPKLLMLSTHESLDKQLMIGQMQGKYQLVVFKNNEKSGHFVHEDLPNHVAVCLTDYIKRAVAPEIFMKEDLGVVPKWGGKINK</sequence>
<proteinExistence type="inferred from homology"/>